<dbReference type="EC" id="3.2.2.27"/>
<dbReference type="EMBL" id="AE005176">
    <property type="protein sequence ID" value="AAK04332.1"/>
    <property type="molecule type" value="Genomic_DNA"/>
</dbReference>
<dbReference type="PIR" id="B86654">
    <property type="entry name" value="B86654"/>
</dbReference>
<dbReference type="RefSeq" id="NP_266390.1">
    <property type="nucleotide sequence ID" value="NC_002662.1"/>
</dbReference>
<dbReference type="RefSeq" id="WP_003129839.1">
    <property type="nucleotide sequence ID" value="NC_002662.1"/>
</dbReference>
<dbReference type="SMR" id="Q9CIX2"/>
<dbReference type="PaxDb" id="272623-L32653"/>
<dbReference type="EnsemblBacteria" id="AAK04332">
    <property type="protein sequence ID" value="AAK04332"/>
    <property type="gene ID" value="L32653"/>
</dbReference>
<dbReference type="KEGG" id="lla:L32653"/>
<dbReference type="PATRIC" id="fig|272623.7.peg.257"/>
<dbReference type="eggNOG" id="COG0692">
    <property type="taxonomic scope" value="Bacteria"/>
</dbReference>
<dbReference type="HOGENOM" id="CLU_032162_3_1_9"/>
<dbReference type="OrthoDB" id="9804372at2"/>
<dbReference type="Proteomes" id="UP000002196">
    <property type="component" value="Chromosome"/>
</dbReference>
<dbReference type="GO" id="GO:0005737">
    <property type="term" value="C:cytoplasm"/>
    <property type="evidence" value="ECO:0007669"/>
    <property type="project" value="UniProtKB-SubCell"/>
</dbReference>
<dbReference type="GO" id="GO:0004844">
    <property type="term" value="F:uracil DNA N-glycosylase activity"/>
    <property type="evidence" value="ECO:0007669"/>
    <property type="project" value="UniProtKB-UniRule"/>
</dbReference>
<dbReference type="GO" id="GO:0097510">
    <property type="term" value="P:base-excision repair, AP site formation via deaminated base removal"/>
    <property type="evidence" value="ECO:0007669"/>
    <property type="project" value="TreeGrafter"/>
</dbReference>
<dbReference type="CDD" id="cd10027">
    <property type="entry name" value="UDG-F1-like"/>
    <property type="match status" value="1"/>
</dbReference>
<dbReference type="Gene3D" id="3.40.470.10">
    <property type="entry name" value="Uracil-DNA glycosylase-like domain"/>
    <property type="match status" value="1"/>
</dbReference>
<dbReference type="HAMAP" id="MF_00148">
    <property type="entry name" value="UDG"/>
    <property type="match status" value="1"/>
</dbReference>
<dbReference type="InterPro" id="IPR002043">
    <property type="entry name" value="UDG_fam1"/>
</dbReference>
<dbReference type="InterPro" id="IPR018085">
    <property type="entry name" value="Ura-DNA_Glyclase_AS"/>
</dbReference>
<dbReference type="InterPro" id="IPR005122">
    <property type="entry name" value="Uracil-DNA_glycosylase-like"/>
</dbReference>
<dbReference type="InterPro" id="IPR036895">
    <property type="entry name" value="Uracil-DNA_glycosylase-like_sf"/>
</dbReference>
<dbReference type="NCBIfam" id="NF003588">
    <property type="entry name" value="PRK05254.1-1"/>
    <property type="match status" value="1"/>
</dbReference>
<dbReference type="NCBIfam" id="NF003589">
    <property type="entry name" value="PRK05254.1-2"/>
    <property type="match status" value="1"/>
</dbReference>
<dbReference type="NCBIfam" id="NF003592">
    <property type="entry name" value="PRK05254.1-5"/>
    <property type="match status" value="1"/>
</dbReference>
<dbReference type="NCBIfam" id="TIGR00628">
    <property type="entry name" value="ung"/>
    <property type="match status" value="1"/>
</dbReference>
<dbReference type="PANTHER" id="PTHR11264">
    <property type="entry name" value="URACIL-DNA GLYCOSYLASE"/>
    <property type="match status" value="1"/>
</dbReference>
<dbReference type="PANTHER" id="PTHR11264:SF0">
    <property type="entry name" value="URACIL-DNA GLYCOSYLASE"/>
    <property type="match status" value="1"/>
</dbReference>
<dbReference type="Pfam" id="PF03167">
    <property type="entry name" value="UDG"/>
    <property type="match status" value="1"/>
</dbReference>
<dbReference type="SMART" id="SM00986">
    <property type="entry name" value="UDG"/>
    <property type="match status" value="1"/>
</dbReference>
<dbReference type="SMART" id="SM00987">
    <property type="entry name" value="UreE_C"/>
    <property type="match status" value="1"/>
</dbReference>
<dbReference type="SUPFAM" id="SSF52141">
    <property type="entry name" value="Uracil-DNA glycosylase-like"/>
    <property type="match status" value="1"/>
</dbReference>
<dbReference type="PROSITE" id="PS00130">
    <property type="entry name" value="U_DNA_GLYCOSYLASE"/>
    <property type="match status" value="1"/>
</dbReference>
<proteinExistence type="inferred from homology"/>
<name>UNG_LACLA</name>
<feature type="chain" id="PRO_0000176107" description="Uracil-DNA glycosylase">
    <location>
        <begin position="1"/>
        <end position="219"/>
    </location>
</feature>
<feature type="active site" description="Proton acceptor" evidence="1">
    <location>
        <position position="62"/>
    </location>
</feature>
<sequence>MKKTDWSQPLRNRLAEDYFPKMIEFINQTYQEGKVYPPENQIFRAIELTPLAQTKVIIVGQDPYPQPGKAQGLAFSYPATFKVNRPDSIVNIQKELREEGFSKDDSDLTAWAEQGVLLLNAVLTVPEFASNAHAGKIWEPLTDEIIKIASDDERPKVFILWGGFARKKAKLIDGSKHLILEAAHPSPLSASRGFFGSHPFSKTNEFLVESGQSPIDWSK</sequence>
<accession>Q9CIX2</accession>
<keyword id="KW-0963">Cytoplasm</keyword>
<keyword id="KW-0227">DNA damage</keyword>
<keyword id="KW-0234">DNA repair</keyword>
<keyword id="KW-0378">Hydrolase</keyword>
<keyword id="KW-1185">Reference proteome</keyword>
<comment type="function">
    <text evidence="1">Excises uracil residues from the DNA which can arise as a result of misincorporation of dUMP residues by DNA polymerase or due to deamination of cytosine.</text>
</comment>
<comment type="catalytic activity">
    <reaction>
        <text>Hydrolyzes single-stranded DNA or mismatched double-stranded DNA and polynucleotides, releasing free uracil.</text>
        <dbReference type="EC" id="3.2.2.27"/>
    </reaction>
</comment>
<comment type="subcellular location">
    <subcellularLocation>
        <location evidence="1">Cytoplasm</location>
    </subcellularLocation>
</comment>
<comment type="similarity">
    <text evidence="2">Belongs to the uracil-DNA glycosylase (UDG) superfamily. UNG family.</text>
</comment>
<evidence type="ECO:0000250" key="1"/>
<evidence type="ECO:0000305" key="2"/>
<reference key="1">
    <citation type="journal article" date="2001" name="Genome Res.">
        <title>The complete genome sequence of the lactic acid bacterium Lactococcus lactis ssp. lactis IL1403.</title>
        <authorList>
            <person name="Bolotin A."/>
            <person name="Wincker P."/>
            <person name="Mauger S."/>
            <person name="Jaillon O."/>
            <person name="Malarme K."/>
            <person name="Weissenbach J."/>
            <person name="Ehrlich S.D."/>
            <person name="Sorokin A."/>
        </authorList>
    </citation>
    <scope>NUCLEOTIDE SEQUENCE [LARGE SCALE GENOMIC DNA]</scope>
    <source>
        <strain>IL1403</strain>
    </source>
</reference>
<protein>
    <recommendedName>
        <fullName>Uracil-DNA glycosylase</fullName>
        <shortName>UDG</shortName>
        <ecNumber>3.2.2.27</ecNumber>
    </recommendedName>
</protein>
<gene>
    <name type="primary">ung</name>
    <name type="ordered locus">LL0234</name>
    <name type="ORF">L32653</name>
</gene>
<organism>
    <name type="scientific">Lactococcus lactis subsp. lactis (strain IL1403)</name>
    <name type="common">Streptococcus lactis</name>
    <dbReference type="NCBI Taxonomy" id="272623"/>
    <lineage>
        <taxon>Bacteria</taxon>
        <taxon>Bacillati</taxon>
        <taxon>Bacillota</taxon>
        <taxon>Bacilli</taxon>
        <taxon>Lactobacillales</taxon>
        <taxon>Streptococcaceae</taxon>
        <taxon>Lactococcus</taxon>
    </lineage>
</organism>